<gene>
    <name evidence="1" type="primary">panB</name>
    <name type="ordered locus">EcolC_3525</name>
</gene>
<name>PANB_ECOLC</name>
<comment type="function">
    <text evidence="1">Catalyzes the reversible reaction in which hydroxymethyl group from 5,10-methylenetetrahydrofolate is transferred onto alpha-ketoisovalerate to form ketopantoate.</text>
</comment>
<comment type="catalytic activity">
    <reaction evidence="1">
        <text>3-methyl-2-oxobutanoate + (6R)-5,10-methylene-5,6,7,8-tetrahydrofolate + H2O = 2-dehydropantoate + (6S)-5,6,7,8-tetrahydrofolate</text>
        <dbReference type="Rhea" id="RHEA:11824"/>
        <dbReference type="ChEBI" id="CHEBI:11561"/>
        <dbReference type="ChEBI" id="CHEBI:11851"/>
        <dbReference type="ChEBI" id="CHEBI:15377"/>
        <dbReference type="ChEBI" id="CHEBI:15636"/>
        <dbReference type="ChEBI" id="CHEBI:57453"/>
        <dbReference type="EC" id="2.1.2.11"/>
    </reaction>
</comment>
<comment type="cofactor">
    <cofactor evidence="1">
        <name>Mg(2+)</name>
        <dbReference type="ChEBI" id="CHEBI:18420"/>
    </cofactor>
    <text evidence="1">Binds 1 Mg(2+) ion per subunit.</text>
</comment>
<comment type="pathway">
    <text evidence="1">Cofactor biosynthesis; (R)-pantothenate biosynthesis; (R)-pantoate from 3-methyl-2-oxobutanoate: step 1/2.</text>
</comment>
<comment type="subunit">
    <text evidence="1">Homodecamer; pentamer of dimers.</text>
</comment>
<comment type="subcellular location">
    <subcellularLocation>
        <location evidence="1">Cytoplasm</location>
    </subcellularLocation>
</comment>
<comment type="similarity">
    <text evidence="1">Belongs to the PanB family.</text>
</comment>
<reference key="1">
    <citation type="submission" date="2008-02" db="EMBL/GenBank/DDBJ databases">
        <title>Complete sequence of Escherichia coli C str. ATCC 8739.</title>
        <authorList>
            <person name="Copeland A."/>
            <person name="Lucas S."/>
            <person name="Lapidus A."/>
            <person name="Glavina del Rio T."/>
            <person name="Dalin E."/>
            <person name="Tice H."/>
            <person name="Bruce D."/>
            <person name="Goodwin L."/>
            <person name="Pitluck S."/>
            <person name="Kiss H."/>
            <person name="Brettin T."/>
            <person name="Detter J.C."/>
            <person name="Han C."/>
            <person name="Kuske C.R."/>
            <person name="Schmutz J."/>
            <person name="Larimer F."/>
            <person name="Land M."/>
            <person name="Hauser L."/>
            <person name="Kyrpides N."/>
            <person name="Mikhailova N."/>
            <person name="Ingram L."/>
            <person name="Richardson P."/>
        </authorList>
    </citation>
    <scope>NUCLEOTIDE SEQUENCE [LARGE SCALE GENOMIC DNA]</scope>
    <source>
        <strain>ATCC 8739 / DSM 1576 / NBRC 3972 / NCIMB 8545 / WDCM 00012 / Crooks</strain>
    </source>
</reference>
<protein>
    <recommendedName>
        <fullName evidence="1">3-methyl-2-oxobutanoate hydroxymethyltransferase</fullName>
        <ecNumber evidence="1">2.1.2.11</ecNumber>
    </recommendedName>
    <alternativeName>
        <fullName evidence="1">Ketopantoate hydroxymethyltransferase</fullName>
        <shortName evidence="1">KPHMT</shortName>
    </alternativeName>
</protein>
<accession>B1IQK6</accession>
<feature type="chain" id="PRO_1000076825" description="3-methyl-2-oxobutanoate hydroxymethyltransferase">
    <location>
        <begin position="1"/>
        <end position="264"/>
    </location>
</feature>
<feature type="active site" description="Proton acceptor" evidence="1">
    <location>
        <position position="181"/>
    </location>
</feature>
<feature type="binding site" evidence="1">
    <location>
        <begin position="45"/>
        <end position="46"/>
    </location>
    <ligand>
        <name>3-methyl-2-oxobutanoate</name>
        <dbReference type="ChEBI" id="CHEBI:11851"/>
    </ligand>
</feature>
<feature type="binding site" evidence="1">
    <location>
        <position position="45"/>
    </location>
    <ligand>
        <name>Mg(2+)</name>
        <dbReference type="ChEBI" id="CHEBI:18420"/>
    </ligand>
</feature>
<feature type="binding site" evidence="1">
    <location>
        <position position="84"/>
    </location>
    <ligand>
        <name>3-methyl-2-oxobutanoate</name>
        <dbReference type="ChEBI" id="CHEBI:11851"/>
    </ligand>
</feature>
<feature type="binding site" evidence="1">
    <location>
        <position position="84"/>
    </location>
    <ligand>
        <name>Mg(2+)</name>
        <dbReference type="ChEBI" id="CHEBI:18420"/>
    </ligand>
</feature>
<feature type="binding site" evidence="1">
    <location>
        <position position="112"/>
    </location>
    <ligand>
        <name>3-methyl-2-oxobutanoate</name>
        <dbReference type="ChEBI" id="CHEBI:11851"/>
    </ligand>
</feature>
<feature type="binding site" evidence="1">
    <location>
        <position position="114"/>
    </location>
    <ligand>
        <name>Mg(2+)</name>
        <dbReference type="ChEBI" id="CHEBI:18420"/>
    </ligand>
</feature>
<proteinExistence type="inferred from homology"/>
<sequence length="264" mass="28237">MKPTTISLLQKYKQEKKRFATITAYDYSFAKLFADEGLNVMLVGDSLGMTVQGHDSTLPVTVADIAYHTAAVRRGAPNCLLLADLPFMAYATPEQAFENAATVMRAGANMVKIEGGEWLVETVQMLTERAVPVCGHLGLTPQSVNIFGGYKVQGRGDEAGDQLLSDALALEAAGAQLLVLECVPVELAKRITEALAIPVIGIGAGNVTDGQILVMHDAFGITGGHIPKFAKNFLAETGDIRAAVRQYMAEVESGVYPGEEHSFH</sequence>
<dbReference type="EC" id="2.1.2.11" evidence="1"/>
<dbReference type="EMBL" id="CP000946">
    <property type="protein sequence ID" value="ACA79139.1"/>
    <property type="molecule type" value="Genomic_DNA"/>
</dbReference>
<dbReference type="RefSeq" id="WP_000805497.1">
    <property type="nucleotide sequence ID" value="NZ_MTFT01000035.1"/>
</dbReference>
<dbReference type="SMR" id="B1IQK6"/>
<dbReference type="KEGG" id="ecl:EcolC_3525"/>
<dbReference type="HOGENOM" id="CLU_036645_1_0_6"/>
<dbReference type="UniPathway" id="UPA00028">
    <property type="reaction ID" value="UER00003"/>
</dbReference>
<dbReference type="GO" id="GO:0005737">
    <property type="term" value="C:cytoplasm"/>
    <property type="evidence" value="ECO:0007669"/>
    <property type="project" value="UniProtKB-SubCell"/>
</dbReference>
<dbReference type="GO" id="GO:0003864">
    <property type="term" value="F:3-methyl-2-oxobutanoate hydroxymethyltransferase activity"/>
    <property type="evidence" value="ECO:0007669"/>
    <property type="project" value="UniProtKB-UniRule"/>
</dbReference>
<dbReference type="GO" id="GO:0000287">
    <property type="term" value="F:magnesium ion binding"/>
    <property type="evidence" value="ECO:0007669"/>
    <property type="project" value="TreeGrafter"/>
</dbReference>
<dbReference type="GO" id="GO:0015940">
    <property type="term" value="P:pantothenate biosynthetic process"/>
    <property type="evidence" value="ECO:0007669"/>
    <property type="project" value="UniProtKB-UniRule"/>
</dbReference>
<dbReference type="CDD" id="cd06557">
    <property type="entry name" value="KPHMT-like"/>
    <property type="match status" value="1"/>
</dbReference>
<dbReference type="FunFam" id="3.20.20.60:FF:000003">
    <property type="entry name" value="3-methyl-2-oxobutanoate hydroxymethyltransferase"/>
    <property type="match status" value="1"/>
</dbReference>
<dbReference type="Gene3D" id="3.20.20.60">
    <property type="entry name" value="Phosphoenolpyruvate-binding domains"/>
    <property type="match status" value="1"/>
</dbReference>
<dbReference type="HAMAP" id="MF_00156">
    <property type="entry name" value="PanB"/>
    <property type="match status" value="1"/>
</dbReference>
<dbReference type="InterPro" id="IPR003700">
    <property type="entry name" value="Pantoate_hydroxy_MeTrfase"/>
</dbReference>
<dbReference type="InterPro" id="IPR015813">
    <property type="entry name" value="Pyrv/PenolPyrv_kinase-like_dom"/>
</dbReference>
<dbReference type="InterPro" id="IPR040442">
    <property type="entry name" value="Pyrv_kinase-like_dom_sf"/>
</dbReference>
<dbReference type="NCBIfam" id="TIGR00222">
    <property type="entry name" value="panB"/>
    <property type="match status" value="1"/>
</dbReference>
<dbReference type="NCBIfam" id="NF001452">
    <property type="entry name" value="PRK00311.1"/>
    <property type="match status" value="1"/>
</dbReference>
<dbReference type="PANTHER" id="PTHR20881">
    <property type="entry name" value="3-METHYL-2-OXOBUTANOATE HYDROXYMETHYLTRANSFERASE"/>
    <property type="match status" value="1"/>
</dbReference>
<dbReference type="PANTHER" id="PTHR20881:SF0">
    <property type="entry name" value="3-METHYL-2-OXOBUTANOATE HYDROXYMETHYLTRANSFERASE"/>
    <property type="match status" value="1"/>
</dbReference>
<dbReference type="Pfam" id="PF02548">
    <property type="entry name" value="Pantoate_transf"/>
    <property type="match status" value="1"/>
</dbReference>
<dbReference type="PIRSF" id="PIRSF000388">
    <property type="entry name" value="Pantoate_hydroxy_MeTrfase"/>
    <property type="match status" value="1"/>
</dbReference>
<dbReference type="SUPFAM" id="SSF51621">
    <property type="entry name" value="Phosphoenolpyruvate/pyruvate domain"/>
    <property type="match status" value="1"/>
</dbReference>
<keyword id="KW-0963">Cytoplasm</keyword>
<keyword id="KW-0460">Magnesium</keyword>
<keyword id="KW-0479">Metal-binding</keyword>
<keyword id="KW-0566">Pantothenate biosynthesis</keyword>
<keyword id="KW-0808">Transferase</keyword>
<evidence type="ECO:0000255" key="1">
    <source>
        <dbReference type="HAMAP-Rule" id="MF_00156"/>
    </source>
</evidence>
<organism>
    <name type="scientific">Escherichia coli (strain ATCC 8739 / DSM 1576 / NBRC 3972 / NCIMB 8545 / WDCM 00012 / Crooks)</name>
    <dbReference type="NCBI Taxonomy" id="481805"/>
    <lineage>
        <taxon>Bacteria</taxon>
        <taxon>Pseudomonadati</taxon>
        <taxon>Pseudomonadota</taxon>
        <taxon>Gammaproteobacteria</taxon>
        <taxon>Enterobacterales</taxon>
        <taxon>Enterobacteriaceae</taxon>
        <taxon>Escherichia</taxon>
    </lineage>
</organism>